<evidence type="ECO:0000303" key="1">
    <source ref="2"/>
</evidence>
<evidence type="ECO:0000303" key="2">
    <source ref="3"/>
</evidence>
<evidence type="ECO:0000305" key="3"/>
<evidence type="ECO:0000312" key="4">
    <source>
        <dbReference type="EMBL" id="BBL54383.1"/>
    </source>
</evidence>
<feature type="transit peptide" description="Chloroplast" evidence="3">
    <location>
        <begin position="1"/>
        <end position="36"/>
    </location>
</feature>
<feature type="chain" id="PRO_0000450206" description="Fucoxanthin-chlorophyll a-c binding protein, chloroplastic">
    <location>
        <begin position="37"/>
        <end position="218"/>
    </location>
</feature>
<feature type="sequence conflict" description="In Ref. 2; AA sequence and 3; AA sequence." ref="2 3">
    <original>E</original>
    <variation>Q</variation>
    <location>
        <position position="43"/>
    </location>
</feature>
<sequence>MFYSAAVAALMVGSASAFLAPAQFNSVAKSSGALSMKLGSSAEGLIGSDLELPEFDPLGFTNNPAPGALEWYRAAELKHGRVAMLAALGQLVQSFYHLPDPVFSESAKPWQALVKVCNERPLAAVQIGLAIFACEAIGQANQAKPGQAAGDLGWDPLNLRGSNEEIFERAQLRELKNGRLAMIAITAMIVQENLTGYGVIEAYRENAINPFGDGKGFF</sequence>
<name>FCP_CHAMQ</name>
<protein>
    <recommendedName>
        <fullName evidence="3">Fucoxanthin-chlorophyll a-c binding protein, chloroplastic</fullName>
        <shortName evidence="3">FCP</shortName>
    </recommendedName>
</protein>
<comment type="function">
    <text evidence="3">The light-harvesting complex (LHC) functions as a light receptor, it captures and delivers excitation energy to photosystems with which it is closely associated. Energy is transferred from the carotenoid and chlorophyll C (or B) to chlorophyll A and the photosynthetic reaction centers where it is used to synthesize ATP and reducing power.</text>
</comment>
<comment type="subunit">
    <text evidence="3">The LHC complex of chromophytic algae is composed of fucoxanthin, chlorophyll A and C bound non-covalently by fucoxanthin chlorophyll proteins (FCPs). The ratio of pigments in this LHC is; fucoxanthin: chlorophyll C: chlorophyll A; (0.6-1): (0.1-0.3): (1).</text>
</comment>
<comment type="subcellular location">
    <subcellularLocation>
        <location evidence="3">Plastid</location>
        <location evidence="3">Chloroplast thylakoid membrane</location>
    </subcellularLocation>
</comment>
<comment type="similarity">
    <text evidence="3">Belongs to the fucoxanthin chlorophyll protein family.</text>
</comment>
<reference evidence="4" key="1">
    <citation type="submission" date="2019-06" db="EMBL/GenBank/DDBJ databases">
        <title>Protein identified by two-dimensional electrophoresis in Chattonella marina var. antiqua.</title>
        <authorList>
            <person name="Mukai K."/>
            <person name="Qiu X."/>
            <person name="Shimasaki Y."/>
            <person name="Oshima Y."/>
        </authorList>
    </citation>
    <scope>NUCLEOTIDE SEQUENCE [GENOMIC DNA]</scope>
    <source>
        <strain evidence="4">NIES-1</strain>
    </source>
</reference>
<reference evidence="3" key="2">
    <citation type="submission" date="2020-02" db="UniProtKB">
        <title>Growth-phase dependent variation in photosynthetic activity and cellular protein expression profile in the harmful raphidophyte Chattonella antiqua.</title>
        <authorList>
            <person name="Qiu X."/>
            <person name="Shimasaki Y."/>
            <person name="Tsuyama M."/>
            <person name="Yamada T."/>
            <person name="Kuwahara R."/>
            <person name="Kawaguchi M."/>
            <person name="Honda M."/>
            <person name="Gunjikake H."/>
            <person name="Tasmin R."/>
            <person name="Shimizu M."/>
            <person name="Sato Y."/>
            <person name="Kato-Unoki Y."/>
            <person name="Nakashima T."/>
            <person name="Matsubara T."/>
            <person name="Yamasaki Y."/>
            <person name="Ichinose H."/>
            <person name="Wariishi H."/>
            <person name="Honjo T."/>
            <person name="Oshima Y."/>
        </authorList>
    </citation>
    <scope>PROTEIN SEQUENCE OF 37-56</scope>
    <source>
        <strain evidence="1">NIES-1</strain>
    </source>
</reference>
<reference evidence="3" key="3">
    <citation type="journal article" date="2020" name="J. Exp. Mar. Biol. Ecol.">
        <title>Diurnal variations in expression of photosynthesis-related proteins in the harmful Raphidophyceae Chattonella marina var. antiqua.</title>
        <authorList>
            <person name="Qiu X."/>
            <person name="Mukai K."/>
            <person name="Shimasaki Y."/>
            <person name="Wu M."/>
            <person name="Chen C."/>
            <person name="Lu Y."/>
            <person name="Ichinose H."/>
            <person name="Nakashima T."/>
            <person name="Kato-Unoki Y."/>
            <person name="Oshima Y."/>
        </authorList>
    </citation>
    <scope>PROTEIN SEQUENCE OF 37-56</scope>
    <source>
        <strain evidence="2">NIES-1</strain>
    </source>
</reference>
<organism>
    <name type="scientific">Chattonella marina var. antiqua</name>
    <name type="common">Red tide flagellate</name>
    <name type="synonym">Chattonella antiqua</name>
    <dbReference type="NCBI Taxonomy" id="859642"/>
    <lineage>
        <taxon>Eukaryota</taxon>
        <taxon>Sar</taxon>
        <taxon>Stramenopiles</taxon>
        <taxon>Ochrophyta</taxon>
        <taxon>Raphidophyceae</taxon>
        <taxon>Chattonellales</taxon>
        <taxon>Chattonellaceae</taxon>
        <taxon>Chattonella</taxon>
    </lineage>
</organism>
<proteinExistence type="evidence at protein level"/>
<keyword id="KW-0148">Chlorophyll</keyword>
<keyword id="KW-0150">Chloroplast</keyword>
<keyword id="KW-0157">Chromophore</keyword>
<keyword id="KW-0903">Direct protein sequencing</keyword>
<keyword id="KW-0472">Membrane</keyword>
<keyword id="KW-0602">Photosynthesis</keyword>
<keyword id="KW-0934">Plastid</keyword>
<keyword id="KW-0793">Thylakoid</keyword>
<keyword id="KW-0809">Transit peptide</keyword>
<dbReference type="EMBL" id="LC486729">
    <property type="protein sequence ID" value="BBL54383.1"/>
    <property type="molecule type" value="Genomic_DNA"/>
</dbReference>
<dbReference type="SMR" id="A0A4Y1YQ38"/>
<dbReference type="GO" id="GO:0009535">
    <property type="term" value="C:chloroplast thylakoid membrane"/>
    <property type="evidence" value="ECO:0007669"/>
    <property type="project" value="UniProtKB-SubCell"/>
</dbReference>
<dbReference type="GO" id="GO:0016168">
    <property type="term" value="F:chlorophyll binding"/>
    <property type="evidence" value="ECO:0007669"/>
    <property type="project" value="UniProtKB-KW"/>
</dbReference>
<dbReference type="GO" id="GO:0009765">
    <property type="term" value="P:photosynthesis, light harvesting"/>
    <property type="evidence" value="ECO:0007669"/>
    <property type="project" value="InterPro"/>
</dbReference>
<dbReference type="Gene3D" id="1.10.3460.10">
    <property type="entry name" value="Chlorophyll a/b binding protein domain"/>
    <property type="match status" value="1"/>
</dbReference>
<dbReference type="InterPro" id="IPR001344">
    <property type="entry name" value="Chloro_AB-bd_pln"/>
</dbReference>
<dbReference type="InterPro" id="IPR022796">
    <property type="entry name" value="Chloroa_b-bind"/>
</dbReference>
<dbReference type="PANTHER" id="PTHR21649">
    <property type="entry name" value="CHLOROPHYLL A/B BINDING PROTEIN"/>
    <property type="match status" value="1"/>
</dbReference>
<dbReference type="Pfam" id="PF00504">
    <property type="entry name" value="Chloroa_b-bind"/>
    <property type="match status" value="1"/>
</dbReference>
<dbReference type="SUPFAM" id="SSF103511">
    <property type="entry name" value="Chlorophyll a-b binding protein"/>
    <property type="match status" value="1"/>
</dbReference>
<accession>A0A4Y1YQ38</accession>
<accession>C0HLQ7</accession>